<organism>
    <name type="scientific">Thermosynechococcus vestitus (strain NIES-2133 / IAM M-273 / BP-1)</name>
    <dbReference type="NCBI Taxonomy" id="197221"/>
    <lineage>
        <taxon>Bacteria</taxon>
        <taxon>Bacillati</taxon>
        <taxon>Cyanobacteriota</taxon>
        <taxon>Cyanophyceae</taxon>
        <taxon>Acaryochloridales</taxon>
        <taxon>Thermosynechococcaceae</taxon>
        <taxon>Thermosynechococcus</taxon>
    </lineage>
</organism>
<protein>
    <recommendedName>
        <fullName evidence="1">Adenylosuccinate synthetase</fullName>
        <shortName evidence="1">AMPSase</shortName>
        <shortName evidence="1">AdSS</shortName>
        <ecNumber evidence="1">6.3.4.4</ecNumber>
    </recommendedName>
    <alternativeName>
        <fullName evidence="1">IMP--aspartate ligase</fullName>
    </alternativeName>
</protein>
<comment type="function">
    <text evidence="1">Plays an important role in the de novo pathway of purine nucleotide biosynthesis. Catalyzes the first committed step in the biosynthesis of AMP from IMP.</text>
</comment>
<comment type="catalytic activity">
    <reaction evidence="1">
        <text>IMP + L-aspartate + GTP = N(6)-(1,2-dicarboxyethyl)-AMP + GDP + phosphate + 2 H(+)</text>
        <dbReference type="Rhea" id="RHEA:15753"/>
        <dbReference type="ChEBI" id="CHEBI:15378"/>
        <dbReference type="ChEBI" id="CHEBI:29991"/>
        <dbReference type="ChEBI" id="CHEBI:37565"/>
        <dbReference type="ChEBI" id="CHEBI:43474"/>
        <dbReference type="ChEBI" id="CHEBI:57567"/>
        <dbReference type="ChEBI" id="CHEBI:58053"/>
        <dbReference type="ChEBI" id="CHEBI:58189"/>
        <dbReference type="EC" id="6.3.4.4"/>
    </reaction>
</comment>
<comment type="cofactor">
    <cofactor evidence="1">
        <name>Mg(2+)</name>
        <dbReference type="ChEBI" id="CHEBI:18420"/>
    </cofactor>
    <text evidence="1">Binds 1 Mg(2+) ion per subunit.</text>
</comment>
<comment type="pathway">
    <text evidence="1">Purine metabolism; AMP biosynthesis via de novo pathway; AMP from IMP: step 1/2.</text>
</comment>
<comment type="subunit">
    <text evidence="1">Homodimer.</text>
</comment>
<comment type="subcellular location">
    <subcellularLocation>
        <location evidence="1">Cytoplasm</location>
    </subcellularLocation>
</comment>
<comment type="similarity">
    <text evidence="1">Belongs to the adenylosuccinate synthetase family.</text>
</comment>
<name>PURA_THEVB</name>
<accession>Q8DLG2</accession>
<evidence type="ECO:0000255" key="1">
    <source>
        <dbReference type="HAMAP-Rule" id="MF_00011"/>
    </source>
</evidence>
<feature type="chain" id="PRO_0000095245" description="Adenylosuccinate synthetase">
    <location>
        <begin position="1"/>
        <end position="447"/>
    </location>
</feature>
<feature type="active site" description="Proton acceptor" evidence="1">
    <location>
        <position position="13"/>
    </location>
</feature>
<feature type="active site" description="Proton donor" evidence="1">
    <location>
        <position position="41"/>
    </location>
</feature>
<feature type="binding site" evidence="1">
    <location>
        <begin position="12"/>
        <end position="18"/>
    </location>
    <ligand>
        <name>GTP</name>
        <dbReference type="ChEBI" id="CHEBI:37565"/>
    </ligand>
</feature>
<feature type="binding site" description="in other chain" evidence="1">
    <location>
        <begin position="13"/>
        <end position="16"/>
    </location>
    <ligand>
        <name>IMP</name>
        <dbReference type="ChEBI" id="CHEBI:58053"/>
        <note>ligand shared between dimeric partners</note>
    </ligand>
</feature>
<feature type="binding site" evidence="1">
    <location>
        <position position="13"/>
    </location>
    <ligand>
        <name>Mg(2+)</name>
        <dbReference type="ChEBI" id="CHEBI:18420"/>
    </ligand>
</feature>
<feature type="binding site" description="in other chain" evidence="1">
    <location>
        <begin position="38"/>
        <end position="41"/>
    </location>
    <ligand>
        <name>IMP</name>
        <dbReference type="ChEBI" id="CHEBI:58053"/>
        <note>ligand shared between dimeric partners</note>
    </ligand>
</feature>
<feature type="binding site" evidence="1">
    <location>
        <begin position="40"/>
        <end position="42"/>
    </location>
    <ligand>
        <name>GTP</name>
        <dbReference type="ChEBI" id="CHEBI:37565"/>
    </ligand>
</feature>
<feature type="binding site" evidence="1">
    <location>
        <position position="40"/>
    </location>
    <ligand>
        <name>Mg(2+)</name>
        <dbReference type="ChEBI" id="CHEBI:18420"/>
    </ligand>
</feature>
<feature type="binding site" description="in other chain" evidence="1">
    <location>
        <position position="128"/>
    </location>
    <ligand>
        <name>IMP</name>
        <dbReference type="ChEBI" id="CHEBI:58053"/>
        <note>ligand shared between dimeric partners</note>
    </ligand>
</feature>
<feature type="binding site" evidence="1">
    <location>
        <position position="142"/>
    </location>
    <ligand>
        <name>IMP</name>
        <dbReference type="ChEBI" id="CHEBI:58053"/>
        <note>ligand shared between dimeric partners</note>
    </ligand>
</feature>
<feature type="binding site" description="in other chain" evidence="1">
    <location>
        <position position="223"/>
    </location>
    <ligand>
        <name>IMP</name>
        <dbReference type="ChEBI" id="CHEBI:58053"/>
        <note>ligand shared between dimeric partners</note>
    </ligand>
</feature>
<feature type="binding site" description="in other chain" evidence="1">
    <location>
        <position position="238"/>
    </location>
    <ligand>
        <name>IMP</name>
        <dbReference type="ChEBI" id="CHEBI:58053"/>
        <note>ligand shared between dimeric partners</note>
    </ligand>
</feature>
<feature type="binding site" evidence="1">
    <location>
        <begin position="298"/>
        <end position="304"/>
    </location>
    <ligand>
        <name>substrate</name>
    </ligand>
</feature>
<feature type="binding site" description="in other chain" evidence="1">
    <location>
        <position position="302"/>
    </location>
    <ligand>
        <name>IMP</name>
        <dbReference type="ChEBI" id="CHEBI:58053"/>
        <note>ligand shared between dimeric partners</note>
    </ligand>
</feature>
<feature type="binding site" evidence="1">
    <location>
        <position position="304"/>
    </location>
    <ligand>
        <name>GTP</name>
        <dbReference type="ChEBI" id="CHEBI:37565"/>
    </ligand>
</feature>
<feature type="binding site" evidence="1">
    <location>
        <begin position="330"/>
        <end position="332"/>
    </location>
    <ligand>
        <name>GTP</name>
        <dbReference type="ChEBI" id="CHEBI:37565"/>
    </ligand>
</feature>
<feature type="binding site" evidence="1">
    <location>
        <begin position="412"/>
        <end position="414"/>
    </location>
    <ligand>
        <name>GTP</name>
        <dbReference type="ChEBI" id="CHEBI:37565"/>
    </ligand>
</feature>
<reference key="1">
    <citation type="journal article" date="2002" name="DNA Res.">
        <title>Complete genome structure of the thermophilic cyanobacterium Thermosynechococcus elongatus BP-1.</title>
        <authorList>
            <person name="Nakamura Y."/>
            <person name="Kaneko T."/>
            <person name="Sato S."/>
            <person name="Ikeuchi M."/>
            <person name="Katoh H."/>
            <person name="Sasamoto S."/>
            <person name="Watanabe A."/>
            <person name="Iriguchi M."/>
            <person name="Kawashima K."/>
            <person name="Kimura T."/>
            <person name="Kishida Y."/>
            <person name="Kiyokawa C."/>
            <person name="Kohara M."/>
            <person name="Matsumoto M."/>
            <person name="Matsuno A."/>
            <person name="Nakazaki N."/>
            <person name="Shimpo S."/>
            <person name="Sugimoto M."/>
            <person name="Takeuchi C."/>
            <person name="Yamada M."/>
            <person name="Tabata S."/>
        </authorList>
    </citation>
    <scope>NUCLEOTIDE SEQUENCE [LARGE SCALE GENOMIC DNA]</scope>
    <source>
        <strain>NIES-2133 / IAM M-273 / BP-1</strain>
    </source>
</reference>
<gene>
    <name evidence="1" type="primary">purA</name>
    <name type="ordered locus">tll0531</name>
</gene>
<proteinExistence type="inferred from homology"/>
<sequence length="447" mass="48903">MANVVVVGAQWGDEGKGKITDLLSKSADVVVRYQGGVNAGHTIVVKDQTLKLHLIPSGILYPDTQCIIGAGTVVDPKVLLEELEQLEQLGVSTENLLIAETAHVTMPYHRQLDIAAEERRGSRRIGTTGRGIGPTYADKSERTGIRMLDLLDRDQLAAKLEWAIAQKNLILEKLYGLAPLEPQPIIEEYSAYGERLRSHIVDGSLVLDDAIRRRRNILFEGAQGTLLDLDHGTYPYVTSSNPVAGGACVGAGIGPTMIDRVIGVAKAYTTRVGEGPFPTELLDEVGELLGDRGAEFGTTTGRRRRCGWFDAVIGRYAVRINGLDCLAITKLDVLDELPEIKVCVAYDIDGERCEHFPSNALKFARCRPIYETLPGWQQSTRHCRSLDDLPKAALNYLKFLAEIMSVPIAIVSLGAERSQTIIVEDPIHGPKRALLKDDGTQVHPILS</sequence>
<dbReference type="EC" id="6.3.4.4" evidence="1"/>
<dbReference type="EMBL" id="BA000039">
    <property type="protein sequence ID" value="BAC08083.1"/>
    <property type="molecule type" value="Genomic_DNA"/>
</dbReference>
<dbReference type="RefSeq" id="NP_681321.1">
    <property type="nucleotide sequence ID" value="NC_004113.1"/>
</dbReference>
<dbReference type="RefSeq" id="WP_011056381.1">
    <property type="nucleotide sequence ID" value="NC_004113.1"/>
</dbReference>
<dbReference type="SMR" id="Q8DLG2"/>
<dbReference type="STRING" id="197221.gene:10747120"/>
<dbReference type="EnsemblBacteria" id="BAC08083">
    <property type="protein sequence ID" value="BAC08083"/>
    <property type="gene ID" value="BAC08083"/>
</dbReference>
<dbReference type="KEGG" id="tel:tll0531"/>
<dbReference type="PATRIC" id="fig|197221.4.peg.560"/>
<dbReference type="eggNOG" id="COG0104">
    <property type="taxonomic scope" value="Bacteria"/>
</dbReference>
<dbReference type="UniPathway" id="UPA00075">
    <property type="reaction ID" value="UER00335"/>
</dbReference>
<dbReference type="Proteomes" id="UP000000440">
    <property type="component" value="Chromosome"/>
</dbReference>
<dbReference type="GO" id="GO:0005737">
    <property type="term" value="C:cytoplasm"/>
    <property type="evidence" value="ECO:0007669"/>
    <property type="project" value="UniProtKB-SubCell"/>
</dbReference>
<dbReference type="GO" id="GO:0004019">
    <property type="term" value="F:adenylosuccinate synthase activity"/>
    <property type="evidence" value="ECO:0007669"/>
    <property type="project" value="UniProtKB-UniRule"/>
</dbReference>
<dbReference type="GO" id="GO:0005525">
    <property type="term" value="F:GTP binding"/>
    <property type="evidence" value="ECO:0007669"/>
    <property type="project" value="UniProtKB-UniRule"/>
</dbReference>
<dbReference type="GO" id="GO:0000287">
    <property type="term" value="F:magnesium ion binding"/>
    <property type="evidence" value="ECO:0007669"/>
    <property type="project" value="UniProtKB-UniRule"/>
</dbReference>
<dbReference type="GO" id="GO:0044208">
    <property type="term" value="P:'de novo' AMP biosynthetic process"/>
    <property type="evidence" value="ECO:0007669"/>
    <property type="project" value="UniProtKB-UniRule"/>
</dbReference>
<dbReference type="GO" id="GO:0046040">
    <property type="term" value="P:IMP metabolic process"/>
    <property type="evidence" value="ECO:0007669"/>
    <property type="project" value="TreeGrafter"/>
</dbReference>
<dbReference type="CDD" id="cd03108">
    <property type="entry name" value="AdSS"/>
    <property type="match status" value="1"/>
</dbReference>
<dbReference type="FunFam" id="1.10.300.10:FF:000001">
    <property type="entry name" value="Adenylosuccinate synthetase"/>
    <property type="match status" value="1"/>
</dbReference>
<dbReference type="FunFam" id="3.90.170.10:FF:000001">
    <property type="entry name" value="Adenylosuccinate synthetase"/>
    <property type="match status" value="1"/>
</dbReference>
<dbReference type="Gene3D" id="3.40.440.10">
    <property type="entry name" value="Adenylosuccinate Synthetase, subunit A, domain 1"/>
    <property type="match status" value="1"/>
</dbReference>
<dbReference type="Gene3D" id="1.10.300.10">
    <property type="entry name" value="Adenylosuccinate Synthetase, subunit A, domain 2"/>
    <property type="match status" value="1"/>
</dbReference>
<dbReference type="Gene3D" id="3.90.170.10">
    <property type="entry name" value="Adenylosuccinate Synthetase, subunit A, domain 3"/>
    <property type="match status" value="1"/>
</dbReference>
<dbReference type="HAMAP" id="MF_00011">
    <property type="entry name" value="Adenylosucc_synth"/>
    <property type="match status" value="1"/>
</dbReference>
<dbReference type="InterPro" id="IPR018220">
    <property type="entry name" value="Adenylosuccin_syn_GTP-bd"/>
</dbReference>
<dbReference type="InterPro" id="IPR033128">
    <property type="entry name" value="Adenylosuccin_syn_Lys_AS"/>
</dbReference>
<dbReference type="InterPro" id="IPR042109">
    <property type="entry name" value="Adenylosuccinate_synth_dom1"/>
</dbReference>
<dbReference type="InterPro" id="IPR042110">
    <property type="entry name" value="Adenylosuccinate_synth_dom2"/>
</dbReference>
<dbReference type="InterPro" id="IPR042111">
    <property type="entry name" value="Adenylosuccinate_synth_dom3"/>
</dbReference>
<dbReference type="InterPro" id="IPR001114">
    <property type="entry name" value="Adenylosuccinate_synthetase"/>
</dbReference>
<dbReference type="InterPro" id="IPR027417">
    <property type="entry name" value="P-loop_NTPase"/>
</dbReference>
<dbReference type="NCBIfam" id="NF002223">
    <property type="entry name" value="PRK01117.1"/>
    <property type="match status" value="1"/>
</dbReference>
<dbReference type="NCBIfam" id="TIGR00184">
    <property type="entry name" value="purA"/>
    <property type="match status" value="1"/>
</dbReference>
<dbReference type="PANTHER" id="PTHR11846">
    <property type="entry name" value="ADENYLOSUCCINATE SYNTHETASE"/>
    <property type="match status" value="1"/>
</dbReference>
<dbReference type="PANTHER" id="PTHR11846:SF0">
    <property type="entry name" value="ADENYLOSUCCINATE SYNTHETASE"/>
    <property type="match status" value="1"/>
</dbReference>
<dbReference type="Pfam" id="PF00709">
    <property type="entry name" value="Adenylsucc_synt"/>
    <property type="match status" value="1"/>
</dbReference>
<dbReference type="SMART" id="SM00788">
    <property type="entry name" value="Adenylsucc_synt"/>
    <property type="match status" value="1"/>
</dbReference>
<dbReference type="SUPFAM" id="SSF52540">
    <property type="entry name" value="P-loop containing nucleoside triphosphate hydrolases"/>
    <property type="match status" value="1"/>
</dbReference>
<dbReference type="PROSITE" id="PS01266">
    <property type="entry name" value="ADENYLOSUCCIN_SYN_1"/>
    <property type="match status" value="1"/>
</dbReference>
<dbReference type="PROSITE" id="PS00513">
    <property type="entry name" value="ADENYLOSUCCIN_SYN_2"/>
    <property type="match status" value="1"/>
</dbReference>
<keyword id="KW-0963">Cytoplasm</keyword>
<keyword id="KW-0342">GTP-binding</keyword>
<keyword id="KW-0436">Ligase</keyword>
<keyword id="KW-0460">Magnesium</keyword>
<keyword id="KW-0479">Metal-binding</keyword>
<keyword id="KW-0547">Nucleotide-binding</keyword>
<keyword id="KW-0658">Purine biosynthesis</keyword>
<keyword id="KW-1185">Reference proteome</keyword>